<feature type="chain" id="PRO_0000169014" description="Serine/threonine kinase YeaG">
    <location>
        <begin position="1"/>
        <end position="644"/>
    </location>
</feature>
<accession>P0ACY4</accession>
<accession>O07963</accession>
<accession>P77391</accession>
<dbReference type="EC" id="2.7.11.1" evidence="1"/>
<dbReference type="EMBL" id="AE014075">
    <property type="protein sequence ID" value="AAN80647.1"/>
    <property type="molecule type" value="Genomic_DNA"/>
</dbReference>
<dbReference type="RefSeq" id="WP_001019882.1">
    <property type="nucleotide sequence ID" value="NZ_CP051263.1"/>
</dbReference>
<dbReference type="STRING" id="199310.c2188"/>
<dbReference type="GeneID" id="86946181"/>
<dbReference type="KEGG" id="ecc:c2188"/>
<dbReference type="eggNOG" id="COG2766">
    <property type="taxonomic scope" value="Bacteria"/>
</dbReference>
<dbReference type="HOGENOM" id="CLU_028588_1_0_6"/>
<dbReference type="BioCyc" id="ECOL199310:C2188-MONOMER"/>
<dbReference type="Proteomes" id="UP000001410">
    <property type="component" value="Chromosome"/>
</dbReference>
<dbReference type="GO" id="GO:0004672">
    <property type="term" value="F:protein kinase activity"/>
    <property type="evidence" value="ECO:0007669"/>
    <property type="project" value="InterPro"/>
</dbReference>
<dbReference type="FunFam" id="3.40.50.300:FF:000609">
    <property type="entry name" value="PrkA family serine protein kinase"/>
    <property type="match status" value="1"/>
</dbReference>
<dbReference type="Gene3D" id="3.40.50.300">
    <property type="entry name" value="P-loop containing nucleotide triphosphate hydrolases"/>
    <property type="match status" value="1"/>
</dbReference>
<dbReference type="InterPro" id="IPR027417">
    <property type="entry name" value="P-loop_NTPase"/>
</dbReference>
<dbReference type="InterPro" id="IPR013153">
    <property type="entry name" value="Prk_AAA_dom"/>
</dbReference>
<dbReference type="InterPro" id="IPR010650">
    <property type="entry name" value="PrkA_C_dom"/>
</dbReference>
<dbReference type="InterPro" id="IPR016230">
    <property type="entry name" value="Ser_kinase_PrkA"/>
</dbReference>
<dbReference type="NCBIfam" id="NF011999">
    <property type="entry name" value="PRK15455.1"/>
    <property type="match status" value="1"/>
</dbReference>
<dbReference type="PANTHER" id="PTHR30267">
    <property type="entry name" value="PROTEIN KINASE PRKA"/>
    <property type="match status" value="1"/>
</dbReference>
<dbReference type="PANTHER" id="PTHR30267:SF2">
    <property type="entry name" value="PROTEIN PRKA"/>
    <property type="match status" value="1"/>
</dbReference>
<dbReference type="Pfam" id="PF08298">
    <property type="entry name" value="AAA_PrkA"/>
    <property type="match status" value="1"/>
</dbReference>
<dbReference type="Pfam" id="PF06798">
    <property type="entry name" value="PrkA"/>
    <property type="match status" value="1"/>
</dbReference>
<dbReference type="PIRSF" id="PIRSF000549">
    <property type="entry name" value="Ser_prot_kin"/>
    <property type="match status" value="1"/>
</dbReference>
<dbReference type="SMART" id="SM00763">
    <property type="entry name" value="AAA_PrkA"/>
    <property type="match status" value="1"/>
</dbReference>
<dbReference type="SUPFAM" id="SSF52540">
    <property type="entry name" value="P-loop containing nucleoside triphosphate hydrolases"/>
    <property type="match status" value="1"/>
</dbReference>
<reference key="1">
    <citation type="journal article" date="2002" name="Proc. Natl. Acad. Sci. U.S.A.">
        <title>Extensive mosaic structure revealed by the complete genome sequence of uropathogenic Escherichia coli.</title>
        <authorList>
            <person name="Welch R.A."/>
            <person name="Burland V."/>
            <person name="Plunkett G. III"/>
            <person name="Redford P."/>
            <person name="Roesch P."/>
            <person name="Rasko D."/>
            <person name="Buckles E.L."/>
            <person name="Liou S.-R."/>
            <person name="Boutin A."/>
            <person name="Hackett J."/>
            <person name="Stroud D."/>
            <person name="Mayhew G.F."/>
            <person name="Rose D.J."/>
            <person name="Zhou S."/>
            <person name="Schwartz D.C."/>
            <person name="Perna N.T."/>
            <person name="Mobley H.L.T."/>
            <person name="Donnenberg M.S."/>
            <person name="Blattner F.R."/>
        </authorList>
    </citation>
    <scope>NUCLEOTIDE SEQUENCE [LARGE SCALE GENOMIC DNA]</scope>
    <source>
        <strain>CFT073 / ATCC 700928 / UPEC</strain>
    </source>
</reference>
<evidence type="ECO:0000250" key="1">
    <source>
        <dbReference type="UniProtKB" id="P0ACY3"/>
    </source>
</evidence>
<evidence type="ECO:0000305" key="2"/>
<protein>
    <recommendedName>
        <fullName evidence="1">Serine/threonine kinase YeaG</fullName>
        <shortName evidence="1">Ser/Thr kinase YeaG</shortName>
        <ecNumber evidence="1">2.7.11.1</ecNumber>
    </recommendedName>
</protein>
<gene>
    <name type="primary">yeaG</name>
    <name type="ordered locus">c2188</name>
</gene>
<proteinExistence type="inferred from homology"/>
<sequence length="644" mass="74480">MNIFDHYRQRYEAAKDEEFTLQEFLTTCRQDRSAYANAAERLLMAIGEPVMVDTAQEPRLSRLFSNRVIARYPAFEEFYGMEDAIEQIVSYLKHAAQGLEEKKQILYLLGPVGGGKSSLAERLKSLMQLVPIYVLSANGERSPVNDHPFCLFNPQEDAQILEKEYGIPRRYLGTIMSPWAAKRLHEFGGDITKFRVVKVWPSILQQIAIAKTEPGDENNQDISALVGKVDIRKLEHYAQNDPDAYGYSGALCRANQGIMEFVEMFKAPIKVLHPLLTATQEGNYNGTEGISALPFNGIILAHSNESEWVTFRNNKNNEAFLDRVYIVKVPYCLRISEEIKIYEKLLNHSELTHAPCAPGTLETLSRFSILSRLKEPENSSIYSKMRVYDGESLKDTDPKAKSYQEYRDYAGVDEGMNGLSTRFAFKILSRVFNFDHVEVAANPVHLFYVLEQQIEREQFPQEQAERYLEFLKGYLIPKYAEFIGKEIQTAYLESYSEYGQNIFDRYVTYADFWIQDQEYRDPDTGQLFDRESLNAELEKIEKPAGISNPKDFRNEIVNFVLRARANNSGRNPNWTSYEKLRTVIEKKMFSNTEELLPVISFNAKTSTDEQKKHDDFVDRMMEKGYTRKQVRLLCEWYLRVRKSS</sequence>
<name>YEAG_ECOL6</name>
<organism>
    <name type="scientific">Escherichia coli O6:H1 (strain CFT073 / ATCC 700928 / UPEC)</name>
    <dbReference type="NCBI Taxonomy" id="199310"/>
    <lineage>
        <taxon>Bacteria</taxon>
        <taxon>Pseudomonadati</taxon>
        <taxon>Pseudomonadota</taxon>
        <taxon>Gammaproteobacteria</taxon>
        <taxon>Enterobacterales</taxon>
        <taxon>Enterobacteriaceae</taxon>
        <taxon>Escherichia</taxon>
    </lineage>
</organism>
<comment type="function">
    <text evidence="1">Kinase that plays a role in the adaptation to sustained nitrogen starvation.</text>
</comment>
<comment type="catalytic activity">
    <reaction evidence="1">
        <text>L-seryl-[protein] + ATP = O-phospho-L-seryl-[protein] + ADP + H(+)</text>
        <dbReference type="Rhea" id="RHEA:17989"/>
        <dbReference type="Rhea" id="RHEA-COMP:9863"/>
        <dbReference type="Rhea" id="RHEA-COMP:11604"/>
        <dbReference type="ChEBI" id="CHEBI:15378"/>
        <dbReference type="ChEBI" id="CHEBI:29999"/>
        <dbReference type="ChEBI" id="CHEBI:30616"/>
        <dbReference type="ChEBI" id="CHEBI:83421"/>
        <dbReference type="ChEBI" id="CHEBI:456216"/>
        <dbReference type="EC" id="2.7.11.1"/>
    </reaction>
</comment>
<comment type="catalytic activity">
    <reaction evidence="1">
        <text>L-threonyl-[protein] + ATP = O-phospho-L-threonyl-[protein] + ADP + H(+)</text>
        <dbReference type="Rhea" id="RHEA:46608"/>
        <dbReference type="Rhea" id="RHEA-COMP:11060"/>
        <dbReference type="Rhea" id="RHEA-COMP:11605"/>
        <dbReference type="ChEBI" id="CHEBI:15378"/>
        <dbReference type="ChEBI" id="CHEBI:30013"/>
        <dbReference type="ChEBI" id="CHEBI:30616"/>
        <dbReference type="ChEBI" id="CHEBI:61977"/>
        <dbReference type="ChEBI" id="CHEBI:456216"/>
        <dbReference type="EC" id="2.7.11.1"/>
    </reaction>
</comment>
<comment type="subunit">
    <text evidence="1">Monomer.</text>
</comment>
<comment type="subcellular location">
    <subcellularLocation>
        <location evidence="1">Cytoplasm</location>
    </subcellularLocation>
</comment>
<comment type="similarity">
    <text evidence="2">Belongs to the PrkA family.</text>
</comment>
<keyword id="KW-0963">Cytoplasm</keyword>
<keyword id="KW-0418">Kinase</keyword>
<keyword id="KW-1185">Reference proteome</keyword>
<keyword id="KW-0346">Stress response</keyword>
<keyword id="KW-0808">Transferase</keyword>